<accession>Q7G9P4</accession>
<accession>O64429</accession>
<accession>Q7GD73</accession>
<accession>Q9SIG7</accession>
<accession>Q9SLZ2</accession>
<evidence type="ECO:0000250" key="1"/>
<evidence type="ECO:0000255" key="2">
    <source>
        <dbReference type="PROSITE-ProRule" id="PRU00465"/>
    </source>
</evidence>
<evidence type="ECO:0000255" key="3">
    <source>
        <dbReference type="PROSITE-ProRule" id="PRU00718"/>
    </source>
</evidence>
<evidence type="ECO:0000269" key="4">
    <source>
    </source>
</evidence>
<evidence type="ECO:0000269" key="5">
    <source>
    </source>
</evidence>
<evidence type="ECO:0000269" key="6">
    <source>
    </source>
</evidence>
<evidence type="ECO:0000269" key="7">
    <source>
    </source>
</evidence>
<evidence type="ECO:0000269" key="8">
    <source>
    </source>
</evidence>
<evidence type="ECO:0000269" key="9">
    <source>
    </source>
</evidence>
<evidence type="ECO:0000269" key="10">
    <source>
    </source>
</evidence>
<evidence type="ECO:0000269" key="11">
    <source>
    </source>
</evidence>
<evidence type="ECO:0000269" key="12">
    <source>
    </source>
</evidence>
<evidence type="ECO:0000269" key="13">
    <source>
    </source>
</evidence>
<evidence type="ECO:0000269" key="14">
    <source>
    </source>
</evidence>
<evidence type="ECO:0000305" key="15"/>
<evidence type="ECO:0000305" key="16">
    <source>
    </source>
</evidence>
<evidence type="ECO:0000305" key="17">
    <source>
    </source>
</evidence>
<proteinExistence type="evidence at protein level"/>
<feature type="chain" id="PRO_0000166111" description="Abscisic-aldehyde oxidase">
    <location>
        <begin position="1"/>
        <end position="1332"/>
    </location>
</feature>
<feature type="domain" description="2Fe-2S ferredoxin-type" evidence="2">
    <location>
        <begin position="1"/>
        <end position="88"/>
    </location>
</feature>
<feature type="domain" description="FAD-binding PCMH-type" evidence="3">
    <location>
        <begin position="219"/>
        <end position="400"/>
    </location>
</feature>
<feature type="binding site" evidence="2">
    <location>
        <position position="40"/>
    </location>
    <ligand>
        <name>[2Fe-2S] cluster</name>
        <dbReference type="ChEBI" id="CHEBI:190135"/>
    </ligand>
</feature>
<feature type="binding site" evidence="2">
    <location>
        <position position="45"/>
    </location>
    <ligand>
        <name>[2Fe-2S] cluster</name>
        <dbReference type="ChEBI" id="CHEBI:190135"/>
    </ligand>
</feature>
<feature type="binding site" evidence="2">
    <location>
        <position position="48"/>
    </location>
    <ligand>
        <name>[2Fe-2S] cluster</name>
        <dbReference type="ChEBI" id="CHEBI:190135"/>
    </ligand>
</feature>
<feature type="mutagenesis site" description="In aao3-3; wilty phenotype in rosette leaves, reduced ABA levels, reduced dormancy, abnormal water loss and abnormal response to water deficit." evidence="9">
    <original>LQRPVK</original>
    <variation>WDLDQ</variation>
    <location>
        <begin position="821"/>
        <end position="826"/>
    </location>
</feature>
<dbReference type="EC" id="1.2.3.14" evidence="4 17"/>
<dbReference type="EC" id="1.2.3.7" evidence="16"/>
<dbReference type="EMBL" id="AB016622">
    <property type="protein sequence ID" value="BAA82672.1"/>
    <property type="molecule type" value="mRNA"/>
</dbReference>
<dbReference type="EMBL" id="AC007154">
    <property type="protein sequence ID" value="AAD22498.1"/>
    <property type="molecule type" value="Genomic_DNA"/>
</dbReference>
<dbReference type="EMBL" id="CP002685">
    <property type="protein sequence ID" value="AEC07944.1"/>
    <property type="molecule type" value="Genomic_DNA"/>
</dbReference>
<dbReference type="EMBL" id="CP002685">
    <property type="protein sequence ID" value="AEC07945.1"/>
    <property type="molecule type" value="Genomic_DNA"/>
</dbReference>
<dbReference type="EMBL" id="AB010080">
    <property type="protein sequence ID" value="BAA28630.1"/>
    <property type="molecule type" value="mRNA"/>
</dbReference>
<dbReference type="PIR" id="D84669">
    <property type="entry name" value="D84669"/>
</dbReference>
<dbReference type="PIR" id="T52176">
    <property type="entry name" value="T52176"/>
</dbReference>
<dbReference type="RefSeq" id="NP_001077966.1">
    <property type="nucleotide sequence ID" value="NM_001084497.1"/>
</dbReference>
<dbReference type="RefSeq" id="NP_180283.1">
    <property type="nucleotide sequence ID" value="NM_128273.3"/>
</dbReference>
<dbReference type="SMR" id="Q7G9P4"/>
<dbReference type="FunCoup" id="Q7G9P4">
    <property type="interactions" value="46"/>
</dbReference>
<dbReference type="STRING" id="3702.Q7G9P4"/>
<dbReference type="GlyGen" id="Q7G9P4">
    <property type="glycosylation" value="1 site"/>
</dbReference>
<dbReference type="iPTMnet" id="Q7G9P4"/>
<dbReference type="PaxDb" id="3702-AT2G27150.2"/>
<dbReference type="ProteomicsDB" id="244792"/>
<dbReference type="EnsemblPlants" id="AT2G27150.1">
    <property type="protein sequence ID" value="AT2G27150.1"/>
    <property type="gene ID" value="AT2G27150"/>
</dbReference>
<dbReference type="EnsemblPlants" id="AT2G27150.2">
    <property type="protein sequence ID" value="AT2G27150.2"/>
    <property type="gene ID" value="AT2G27150"/>
</dbReference>
<dbReference type="GeneID" id="817257"/>
<dbReference type="Gramene" id="AT2G27150.1">
    <property type="protein sequence ID" value="AT2G27150.1"/>
    <property type="gene ID" value="AT2G27150"/>
</dbReference>
<dbReference type="Gramene" id="AT2G27150.2">
    <property type="protein sequence ID" value="AT2G27150.2"/>
    <property type="gene ID" value="AT2G27150"/>
</dbReference>
<dbReference type="KEGG" id="ath:AT2G27150"/>
<dbReference type="Araport" id="AT2G27150"/>
<dbReference type="TAIR" id="AT2G27150">
    <property type="gene designation" value="AAO3"/>
</dbReference>
<dbReference type="eggNOG" id="KOG0430">
    <property type="taxonomic scope" value="Eukaryota"/>
</dbReference>
<dbReference type="HOGENOM" id="CLU_001681_1_1_1"/>
<dbReference type="InParanoid" id="Q7G9P4"/>
<dbReference type="PhylomeDB" id="Q7G9P4"/>
<dbReference type="BioCyc" id="ARA:AT2G27150-MONOMER"/>
<dbReference type="BioCyc" id="MetaCyc:AT2G27150-MONOMER"/>
<dbReference type="BRENDA" id="1.2.3.14">
    <property type="organism ID" value="399"/>
</dbReference>
<dbReference type="SABIO-RK" id="Q7G9P4"/>
<dbReference type="PRO" id="PR:Q7G9P4"/>
<dbReference type="Proteomes" id="UP000006548">
    <property type="component" value="Chromosome 2"/>
</dbReference>
<dbReference type="ExpressionAtlas" id="Q7G9P4">
    <property type="expression patterns" value="baseline and differential"/>
</dbReference>
<dbReference type="GO" id="GO:0005737">
    <property type="term" value="C:cytoplasm"/>
    <property type="evidence" value="ECO:0007669"/>
    <property type="project" value="UniProtKB-SubCell"/>
</dbReference>
<dbReference type="GO" id="GO:0051537">
    <property type="term" value="F:2 iron, 2 sulfur cluster binding"/>
    <property type="evidence" value="ECO:0007669"/>
    <property type="project" value="UniProtKB-KW"/>
</dbReference>
<dbReference type="GO" id="GO:0010293">
    <property type="term" value="F:abscisic aldehyde oxidase activity"/>
    <property type="evidence" value="ECO:0000314"/>
    <property type="project" value="TAIR"/>
</dbReference>
<dbReference type="GO" id="GO:0004031">
    <property type="term" value="F:aldehyde oxidase activity"/>
    <property type="evidence" value="ECO:0000314"/>
    <property type="project" value="TAIR"/>
</dbReference>
<dbReference type="GO" id="GO:0071949">
    <property type="term" value="F:FAD binding"/>
    <property type="evidence" value="ECO:0007669"/>
    <property type="project" value="InterPro"/>
</dbReference>
<dbReference type="GO" id="GO:0050302">
    <property type="term" value="F:indole-3-acetaldehyde oxidase activity"/>
    <property type="evidence" value="ECO:0000314"/>
    <property type="project" value="TAIR"/>
</dbReference>
<dbReference type="GO" id="GO:0005506">
    <property type="term" value="F:iron ion binding"/>
    <property type="evidence" value="ECO:0007669"/>
    <property type="project" value="InterPro"/>
</dbReference>
<dbReference type="GO" id="GO:0031625">
    <property type="term" value="F:ubiquitin protein ligase binding"/>
    <property type="evidence" value="ECO:0000353"/>
    <property type="project" value="UniProtKB"/>
</dbReference>
<dbReference type="GO" id="GO:0009688">
    <property type="term" value="P:abscisic acid biosynthetic process"/>
    <property type="evidence" value="ECO:0000315"/>
    <property type="project" value="TAIR"/>
</dbReference>
<dbReference type="GO" id="GO:0009851">
    <property type="term" value="P:auxin biosynthetic process"/>
    <property type="evidence" value="ECO:0007669"/>
    <property type="project" value="UniProtKB-KW"/>
</dbReference>
<dbReference type="FunFam" id="1.10.150.120:FF:000006">
    <property type="entry name" value="Aldehyde oxidase"/>
    <property type="match status" value="1"/>
</dbReference>
<dbReference type="FunFam" id="3.30.365.10:FF:000029">
    <property type="entry name" value="Aldehyde oxidase"/>
    <property type="match status" value="1"/>
</dbReference>
<dbReference type="FunFam" id="3.30.465.10:FF:000013">
    <property type="entry name" value="Aldehyde oxidase"/>
    <property type="match status" value="1"/>
</dbReference>
<dbReference type="FunFam" id="3.90.1170.50:FF:000003">
    <property type="entry name" value="Aldehyde oxidase"/>
    <property type="match status" value="1"/>
</dbReference>
<dbReference type="FunFam" id="3.30.390.50:FF:000003">
    <property type="entry name" value="Aldehyde oxidase1"/>
    <property type="match status" value="1"/>
</dbReference>
<dbReference type="FunFam" id="3.30.365.10:FF:000001">
    <property type="entry name" value="Xanthine dehydrogenase oxidase"/>
    <property type="match status" value="1"/>
</dbReference>
<dbReference type="FunFam" id="3.10.20.30:FF:000012">
    <property type="entry name" value="Xanthine dehydrogenase/oxidase"/>
    <property type="match status" value="1"/>
</dbReference>
<dbReference type="Gene3D" id="3.10.20.30">
    <property type="match status" value="1"/>
</dbReference>
<dbReference type="Gene3D" id="3.30.465.10">
    <property type="match status" value="1"/>
</dbReference>
<dbReference type="Gene3D" id="1.10.150.120">
    <property type="entry name" value="[2Fe-2S]-binding domain"/>
    <property type="match status" value="1"/>
</dbReference>
<dbReference type="Gene3D" id="3.90.1170.50">
    <property type="entry name" value="Aldehyde oxidase/xanthine dehydrogenase, a/b hammerhead"/>
    <property type="match status" value="1"/>
</dbReference>
<dbReference type="Gene3D" id="3.30.365.10">
    <property type="entry name" value="Aldehyde oxidase/xanthine dehydrogenase, molybdopterin binding domain"/>
    <property type="match status" value="4"/>
</dbReference>
<dbReference type="Gene3D" id="3.30.390.50">
    <property type="entry name" value="CO dehydrogenase flavoprotein, C-terminal domain"/>
    <property type="match status" value="1"/>
</dbReference>
<dbReference type="Gene3D" id="3.30.43.10">
    <property type="entry name" value="Uridine Diphospho-n-acetylenolpyruvylglucosamine Reductase, domain 2"/>
    <property type="match status" value="1"/>
</dbReference>
<dbReference type="InterPro" id="IPR002888">
    <property type="entry name" value="2Fe-2S-bd"/>
</dbReference>
<dbReference type="InterPro" id="IPR036884">
    <property type="entry name" value="2Fe-2S-bd_dom_sf"/>
</dbReference>
<dbReference type="InterPro" id="IPR036010">
    <property type="entry name" value="2Fe-2S_ferredoxin-like_sf"/>
</dbReference>
<dbReference type="InterPro" id="IPR001041">
    <property type="entry name" value="2Fe-2S_ferredoxin-type"/>
</dbReference>
<dbReference type="InterPro" id="IPR006058">
    <property type="entry name" value="2Fe2S_fd_BS"/>
</dbReference>
<dbReference type="InterPro" id="IPR000674">
    <property type="entry name" value="Ald_Oxase/Xan_DH_a/b"/>
</dbReference>
<dbReference type="InterPro" id="IPR036856">
    <property type="entry name" value="Ald_Oxase/Xan_DH_a/b_sf"/>
</dbReference>
<dbReference type="InterPro" id="IPR016208">
    <property type="entry name" value="Ald_Oxase/xanthine_DH-like"/>
</dbReference>
<dbReference type="InterPro" id="IPR008274">
    <property type="entry name" value="AldOxase/xan_DH_MoCoBD1"/>
</dbReference>
<dbReference type="InterPro" id="IPR046867">
    <property type="entry name" value="AldOxase/xan_DH_MoCoBD2"/>
</dbReference>
<dbReference type="InterPro" id="IPR037165">
    <property type="entry name" value="AldOxase/xan_DH_Mopterin-bd_sf"/>
</dbReference>
<dbReference type="InterPro" id="IPR012675">
    <property type="entry name" value="Beta-grasp_dom_sf"/>
</dbReference>
<dbReference type="InterPro" id="IPR005107">
    <property type="entry name" value="CO_DH_flav_C"/>
</dbReference>
<dbReference type="InterPro" id="IPR036683">
    <property type="entry name" value="CO_DH_flav_C_dom_sf"/>
</dbReference>
<dbReference type="InterPro" id="IPR016166">
    <property type="entry name" value="FAD-bd_PCMH"/>
</dbReference>
<dbReference type="InterPro" id="IPR036318">
    <property type="entry name" value="FAD-bd_PCMH-like_sf"/>
</dbReference>
<dbReference type="InterPro" id="IPR016167">
    <property type="entry name" value="FAD-bd_PCMH_sub1"/>
</dbReference>
<dbReference type="InterPro" id="IPR016169">
    <property type="entry name" value="FAD-bd_PCMH_sub2"/>
</dbReference>
<dbReference type="InterPro" id="IPR002346">
    <property type="entry name" value="Mopterin_DH_FAD-bd"/>
</dbReference>
<dbReference type="PANTHER" id="PTHR11908:SF132">
    <property type="entry name" value="ALDEHYDE OXIDASE 1-RELATED"/>
    <property type="match status" value="1"/>
</dbReference>
<dbReference type="PANTHER" id="PTHR11908">
    <property type="entry name" value="XANTHINE DEHYDROGENASE"/>
    <property type="match status" value="1"/>
</dbReference>
<dbReference type="Pfam" id="PF01315">
    <property type="entry name" value="Ald_Xan_dh_C"/>
    <property type="match status" value="1"/>
</dbReference>
<dbReference type="Pfam" id="PF03450">
    <property type="entry name" value="CO_deh_flav_C"/>
    <property type="match status" value="1"/>
</dbReference>
<dbReference type="Pfam" id="PF00941">
    <property type="entry name" value="FAD_binding_5"/>
    <property type="match status" value="1"/>
</dbReference>
<dbReference type="Pfam" id="PF00111">
    <property type="entry name" value="Fer2"/>
    <property type="match status" value="1"/>
</dbReference>
<dbReference type="Pfam" id="PF01799">
    <property type="entry name" value="Fer2_2"/>
    <property type="match status" value="1"/>
</dbReference>
<dbReference type="Pfam" id="PF02738">
    <property type="entry name" value="MoCoBD_1"/>
    <property type="match status" value="1"/>
</dbReference>
<dbReference type="Pfam" id="PF20256">
    <property type="entry name" value="MoCoBD_2"/>
    <property type="match status" value="1"/>
</dbReference>
<dbReference type="PIRSF" id="PIRSF000127">
    <property type="entry name" value="Xanthine_DH"/>
    <property type="match status" value="1"/>
</dbReference>
<dbReference type="SMART" id="SM01008">
    <property type="entry name" value="Ald_Xan_dh_C"/>
    <property type="match status" value="1"/>
</dbReference>
<dbReference type="SMART" id="SM01092">
    <property type="entry name" value="CO_deh_flav_C"/>
    <property type="match status" value="1"/>
</dbReference>
<dbReference type="SUPFAM" id="SSF54292">
    <property type="entry name" value="2Fe-2S ferredoxin-like"/>
    <property type="match status" value="1"/>
</dbReference>
<dbReference type="SUPFAM" id="SSF55447">
    <property type="entry name" value="CO dehydrogenase flavoprotein C-terminal domain-like"/>
    <property type="match status" value="1"/>
</dbReference>
<dbReference type="SUPFAM" id="SSF47741">
    <property type="entry name" value="CO dehydrogenase ISP C-domain like"/>
    <property type="match status" value="1"/>
</dbReference>
<dbReference type="SUPFAM" id="SSF54665">
    <property type="entry name" value="CO dehydrogenase molybdoprotein N-domain-like"/>
    <property type="match status" value="1"/>
</dbReference>
<dbReference type="SUPFAM" id="SSF56176">
    <property type="entry name" value="FAD-binding/transporter-associated domain-like"/>
    <property type="match status" value="1"/>
</dbReference>
<dbReference type="SUPFAM" id="SSF56003">
    <property type="entry name" value="Molybdenum cofactor-binding domain"/>
    <property type="match status" value="1"/>
</dbReference>
<dbReference type="PROSITE" id="PS00197">
    <property type="entry name" value="2FE2S_FER_1"/>
    <property type="match status" value="1"/>
</dbReference>
<dbReference type="PROSITE" id="PS51085">
    <property type="entry name" value="2FE2S_FER_2"/>
    <property type="match status" value="1"/>
</dbReference>
<dbReference type="PROSITE" id="PS51387">
    <property type="entry name" value="FAD_PCMH"/>
    <property type="match status" value="1"/>
</dbReference>
<name>ALDO3_ARATH</name>
<gene>
    <name type="primary">AAO3</name>
    <name type="synonym">AO4</name>
    <name type="ordered locus">At2g27150</name>
    <name type="ORF">F20F1.2</name>
</gene>
<sequence>MDLEFAVNGERFKIDSVDPSTTLLEFLRLNTPFKSVKLGCGEGGCGACLVVLSKYDPELDQVKECCINSCLTLLCSVNGCSITTSEGLGNTKKGFHPIHKRFAGFHASQCGFCTPGMCISLYSSLANAENNSSKDFTVSEAEKSVSGNLCRCTGYRPIVDACKSFASDVDIEDLGLNSFWKKGESKEVMFKNLPPYNPKDHLVTFPEFLKKKEKVDNGSDHLKYRWTTPFSVAELHNIMEAANSGDSLKLVVGNTGTGYYKDEERFDRYIDISNIPEMSMIKKDEKGIEIGAAVTISNAIDALEKESKSSYVFKKMATHMEKIGNRSIRNSGSIGGNLVMAQSRKFPSDVTTLLLAVDASVYMLNGRKTEKVTLQEFLELSPVLDSKRVLLKVEIPSWTAPSGDDTEFLFESYRAAPRSIGNALPYLNAAFLALVSRQEASRKGVTVEKCFLAFGSYGGDHSIRAIEVETFLTGKLLSYSVLYEAVGLLKGIIVPGKDTLHSEYRKSLAVGYLFEFFYPLIESGHRICSLDSGNKHNNSHVDTVKSLPFLSSSQQVLESNEFKPIGEAVIKVGAALQASGEAVFVDDIPTLPDCLHGAFIYSTEPLAKIKSLSFRENVTPTGVFAVLTFKDIPQQGQNIGSKTLFGPGPLFADELTRCAGQRIALVVADTQKHADMAAKLAVVEYDTKNLEQPILTVEDAVKRSSFFEVHPMFYPEPVGDVIKGMEEAERKIISSELRLGSQYFFYMEPQTALALPDEDNCVKVFSSSQAPEYVHSVIATCLGIQEHNVRVITRRVGGGFGGKAVKSMPVATACALGAYKLQRPVKMFLNRKTDMIMAGGRHPMKINYNVGFRSDGKLTALELTMLIDAGLEPDVSPIMPRNIMGPLRKYDWGALSFDVKVCKTNCLSRTAMRAPGEVQGSYIAESIIENVASSLQMDVDAVRKINLHTYDSLRKFYNHIAGDPDEYTLPLLWEKLEISSKFKERSEMVKEFNLCNVWRKRGISRVPIVHQVMQRPTPGKVSILSDGSVVVEVGGIEIGQGLWTKVQQMVAYGLGMVKCEGNEKLLDRIRVVQSDTLGMIQGGFTAGSTTSESSCEAVRLCCVILVERLKPIMDQMMMEKSGSVTWNILIQQAYGQYINLSASTLYKPEYSSMEYLNYGVGVSEVEVDLVTGKTEILRSDIIYDCGKSLNPAVDLGQTEGAFVQGIGFFMMEEYTTDEKGLVVQQGTWDYKIPTVDTIPKHFNVEIVNTGHHKNRVLSSKASGEPPLLLAASVHCATRSAIREARKHSLSSNFIDGSDSEFELPVPATMPVVKSLCGLYSVEKYLQGKIKGQ</sequence>
<comment type="function">
    <text evidence="4 5 9 10 11">In higher plants aldehyde oxidases (AO) appear to be homo- and heterodimeric assemblies of AO subunits with probably different physiological functions. AO-delta may be involved in the last step of abscisic acid biosynthesis, at least in leaves and seeds. In vitro, AO-delta oxidizes abscisic aldehyde to abscisic acid (ABA) (PubMed:10972874). In vitro, AO-delta also uses 1-naphthaldehyde, indole-3-aldehyde (IAld), benzaldehyde and cinnamaldehyde as substrate; the AAO2-AAO3 dimer also uses abscisic aldehyde as substrate.</text>
</comment>
<comment type="catalytic activity">
    <reaction evidence="4 17">
        <text>2-cis-(+)-abscisic aldehyde + O2 + H2O = 2-cis-(+)-abscisate + H2O2 + H(+)</text>
        <dbReference type="Rhea" id="RHEA:20529"/>
        <dbReference type="ChEBI" id="CHEBI:15377"/>
        <dbReference type="ChEBI" id="CHEBI:15378"/>
        <dbReference type="ChEBI" id="CHEBI:15379"/>
        <dbReference type="ChEBI" id="CHEBI:16240"/>
        <dbReference type="ChEBI" id="CHEBI:31157"/>
        <dbReference type="ChEBI" id="CHEBI:37569"/>
        <dbReference type="EC" id="1.2.3.14"/>
    </reaction>
    <physiologicalReaction direction="left-to-right" evidence="16 17">
        <dbReference type="Rhea" id="RHEA:20530"/>
    </physiologicalReaction>
</comment>
<comment type="catalytic activity">
    <reaction evidence="16 17">
        <text>1-naphthaldehyde + O2 + H2O = 1-naphthoate + H2O2 + H(+)</text>
        <dbReference type="Rhea" id="RHEA:58968"/>
        <dbReference type="ChEBI" id="CHEBI:15377"/>
        <dbReference type="ChEBI" id="CHEBI:15378"/>
        <dbReference type="ChEBI" id="CHEBI:15379"/>
        <dbReference type="ChEBI" id="CHEBI:16240"/>
        <dbReference type="ChEBI" id="CHEBI:36298"/>
        <dbReference type="ChEBI" id="CHEBI:52367"/>
    </reaction>
    <physiologicalReaction direction="left-to-right" evidence="4 17">
        <dbReference type="Rhea" id="RHEA:58969"/>
    </physiologicalReaction>
</comment>
<comment type="catalytic activity">
    <reaction evidence="16">
        <text>indole-3-acetaldehyde + O2 + H2O = (indol-3-yl)acetate + H2O2 + H(+)</text>
        <dbReference type="Rhea" id="RHEA:16277"/>
        <dbReference type="ChEBI" id="CHEBI:15377"/>
        <dbReference type="ChEBI" id="CHEBI:15378"/>
        <dbReference type="ChEBI" id="CHEBI:15379"/>
        <dbReference type="ChEBI" id="CHEBI:16240"/>
        <dbReference type="ChEBI" id="CHEBI:18086"/>
        <dbReference type="ChEBI" id="CHEBI:30854"/>
        <dbReference type="EC" id="1.2.3.7"/>
    </reaction>
    <physiologicalReaction direction="left-to-right" evidence="16">
        <dbReference type="Rhea" id="RHEA:16278"/>
    </physiologicalReaction>
</comment>
<comment type="cofactor">
    <cofactor evidence="1">
        <name>[2Fe-2S] cluster</name>
        <dbReference type="ChEBI" id="CHEBI:190135"/>
    </cofactor>
    <text evidence="1">Binds 2 [2Fe-2S] clusters.</text>
</comment>
<comment type="cofactor">
    <cofactor evidence="1">
        <name>FAD</name>
        <dbReference type="ChEBI" id="CHEBI:57692"/>
    </cofactor>
</comment>
<comment type="cofactor">
    <cofactor evidence="1">
        <name>Mo-molybdopterin</name>
        <dbReference type="ChEBI" id="CHEBI:71302"/>
    </cofactor>
    <text evidence="1">Binds 1 Mo-molybdopterin (Mo-MPT) cofactor per subunit.</text>
</comment>
<comment type="biophysicochemical properties">
    <kinetics>
        <KM evidence="4">0.51 uM for abscisic aldehyde</KM>
        <KM evidence="4">34 uM for indole-3-aldehyde</KM>
        <KM evidence="4">44 uM for benzaldehyde</KM>
        <KM evidence="4">1.8 uM for 1-naphthaldehyde</KM>
        <KM evidence="4">700 uM for cinnamaldehyde</KM>
        <text>All these kinetic values were obtained with AO-delta dimer.</text>
    </kinetics>
</comment>
<comment type="subunit">
    <text evidence="4 8 12">Aldehyde oxidases (AO) are homodimers and heterodimers of AO subunits. AO-delta is a AAO3 homodimer. AAO3 also forms a dimer with AAO2. Interacts with PUB44, and this interaction probably results in targeting of this protein to the proteasome.</text>
</comment>
<comment type="subcellular location">
    <subcellularLocation>
        <location evidence="15">Cytoplasm</location>
    </subcellularLocation>
</comment>
<comment type="tissue specificity">
    <text evidence="4 5 8 9 10 13 14">Expressed in vascular tissues of all organs, particularly in phloem companion cells and xylem parenchymatic cells. Highly expressed in roots and rosettes, and to lower extent in seedlings, stems and flowers. Expressed at very low levels in siliques and dry seeds. Also detected in root dividing cells (tips and primordia), in mesophyll cells and inside the guard cells.</text>
</comment>
<comment type="induction">
    <text evidence="4 6 7 8 11">Transcripts are induced by dehydration, in rosettes but not in roots. Induction by cold, ABA, sodium chloride (NaCl) and polyethylene glycol (PEG) is dependent of the zeaxanthin epoxidase ABA1 protein (ZEP). Induction by glucose requires the short chain alcohol dehydrogenase ABA2 protein. Repressed by mannitol.</text>
</comment>
<comment type="disruption phenotype">
    <text evidence="11">Impaired abscisic acid (ABA) biosynthesis.</text>
</comment>
<comment type="miscellaneous">
    <text>In vitro, cannot discriminate between (+) and (-) enantiomers of abscisic acid and leads respectively to (+) and (-) cis-ABA.</text>
</comment>
<comment type="similarity">
    <text evidence="15">Belongs to the xanthine dehydrogenase family.</text>
</comment>
<protein>
    <recommendedName>
        <fullName>Abscisic-aldehyde oxidase</fullName>
        <ecNumber evidence="4 17">1.2.3.14</ecNumber>
    </recommendedName>
    <alternativeName>
        <fullName>Aldehyde oxidase 3</fullName>
        <shortName>AO-3</shortName>
        <shortName>AtAO-3</shortName>
        <shortName>AtAO4</shortName>
    </alternativeName>
    <alternativeName>
        <fullName>Indole-3-acetaldehyde oxidase</fullName>
        <shortName>IAA oxidase</shortName>
        <ecNumber evidence="16">1.2.3.7</ecNumber>
    </alternativeName>
</protein>
<organism>
    <name type="scientific">Arabidopsis thaliana</name>
    <name type="common">Mouse-ear cress</name>
    <dbReference type="NCBI Taxonomy" id="3702"/>
    <lineage>
        <taxon>Eukaryota</taxon>
        <taxon>Viridiplantae</taxon>
        <taxon>Streptophyta</taxon>
        <taxon>Embryophyta</taxon>
        <taxon>Tracheophyta</taxon>
        <taxon>Spermatophyta</taxon>
        <taxon>Magnoliopsida</taxon>
        <taxon>eudicotyledons</taxon>
        <taxon>Gunneridae</taxon>
        <taxon>Pentapetalae</taxon>
        <taxon>rosids</taxon>
        <taxon>malvids</taxon>
        <taxon>Brassicales</taxon>
        <taxon>Brassicaceae</taxon>
        <taxon>Camelineae</taxon>
        <taxon>Arabidopsis</taxon>
    </lineage>
</organism>
<reference key="1">
    <citation type="journal article" date="2004" name="Plant Physiol.">
        <title>Tissue-specific localization of an abscisic acid biosynthetic enzyme, AAO3, in Arabidopsis.</title>
        <authorList>
            <person name="Koiwai H."/>
            <person name="Nakaminami K."/>
            <person name="Seo M."/>
            <person name="Mitsuhashi W."/>
            <person name="Toyomasu T."/>
            <person name="Koshiba T."/>
        </authorList>
    </citation>
    <scope>NUCLEOTIDE SEQUENCE [MRNA]</scope>
    <scope>SUBUNIT</scope>
    <scope>TISSUE SPECIFICITY</scope>
    <scope>INDUCTION</scope>
    <source>
        <strain>cv. Columbia</strain>
        <tissue>Seedling hypocotyl</tissue>
    </source>
</reference>
<reference key="2">
    <citation type="journal article" date="1999" name="Nature">
        <title>Sequence and analysis of chromosome 2 of the plant Arabidopsis thaliana.</title>
        <authorList>
            <person name="Lin X."/>
            <person name="Kaul S."/>
            <person name="Rounsley S.D."/>
            <person name="Shea T.P."/>
            <person name="Benito M.-I."/>
            <person name="Town C.D."/>
            <person name="Fujii C.Y."/>
            <person name="Mason T.M."/>
            <person name="Bowman C.L."/>
            <person name="Barnstead M.E."/>
            <person name="Feldblyum T.V."/>
            <person name="Buell C.R."/>
            <person name="Ketchum K.A."/>
            <person name="Lee J.J."/>
            <person name="Ronning C.M."/>
            <person name="Koo H.L."/>
            <person name="Moffat K.S."/>
            <person name="Cronin L.A."/>
            <person name="Shen M."/>
            <person name="Pai G."/>
            <person name="Van Aken S."/>
            <person name="Umayam L."/>
            <person name="Tallon L.J."/>
            <person name="Gill J.E."/>
            <person name="Adams M.D."/>
            <person name="Carrera A.J."/>
            <person name="Creasy T.H."/>
            <person name="Goodman H.M."/>
            <person name="Somerville C.R."/>
            <person name="Copenhaver G.P."/>
            <person name="Preuss D."/>
            <person name="Nierman W.C."/>
            <person name="White O."/>
            <person name="Eisen J.A."/>
            <person name="Salzberg S.L."/>
            <person name="Fraser C.M."/>
            <person name="Venter J.C."/>
        </authorList>
    </citation>
    <scope>NUCLEOTIDE SEQUENCE [LARGE SCALE GENOMIC DNA]</scope>
    <source>
        <strain>cv. Columbia</strain>
    </source>
</reference>
<reference key="3">
    <citation type="journal article" date="2017" name="Plant J.">
        <title>Araport11: a complete reannotation of the Arabidopsis thaliana reference genome.</title>
        <authorList>
            <person name="Cheng C.Y."/>
            <person name="Krishnakumar V."/>
            <person name="Chan A.P."/>
            <person name="Thibaud-Nissen F."/>
            <person name="Schobel S."/>
            <person name="Town C.D."/>
        </authorList>
    </citation>
    <scope>GENOME REANNOTATION</scope>
    <source>
        <strain>cv. Columbia</strain>
    </source>
</reference>
<reference key="4">
    <citation type="journal article" date="1998" name="Plant Cell Physiol.">
        <title>Molecular cloning and characterization of aldehyde oxidases in Arabidopsis thaliana.</title>
        <authorList>
            <person name="Sekimoto H."/>
            <person name="Seo M."/>
            <person name="Kawakami N."/>
            <person name="Komano T."/>
            <person name="Desloire S."/>
            <person name="Liotenberg S."/>
            <person name="Marion-Poll A."/>
            <person name="Caboche M."/>
            <person name="Kamiya Y."/>
            <person name="Koshiba T."/>
        </authorList>
    </citation>
    <scope>NUCLEOTIDE SEQUENCE [MRNA] OF 347-1332</scope>
    <scope>TISSUE SPECIFICITY</scope>
    <source>
        <strain>cv. Columbia</strain>
        <tissue>Seedling hypocotyl</tissue>
    </source>
</reference>
<reference key="5">
    <citation type="journal article" date="1998" name="Plant Physiol.">
        <title>Higher activity of an aldehyde oxidase in the auxin-overproducing superroot1 mutant of Arabidopsis thaliana.</title>
        <authorList>
            <person name="Seo M."/>
            <person name="Akaba S."/>
            <person name="Oritani T."/>
            <person name="Delarue M."/>
            <person name="Bellini C."/>
            <person name="Caboche M."/>
            <person name="Koshiba T."/>
        </authorList>
    </citation>
    <scope>TISSUE SPECIFICITY</scope>
    <scope>SUBSTRATE SPECIFICITY</scope>
</reference>
<reference key="6">
    <citation type="journal article" date="2000" name="Plant J.">
        <title>Abscisic aldehyde oxidase in leaves of Arabidopsis thaliana.</title>
        <authorList>
            <person name="Seo M."/>
            <person name="Koiwai H."/>
            <person name="Akaba S."/>
            <person name="Komano T."/>
            <person name="Oritani T."/>
            <person name="Kamiya Y."/>
            <person name="Koshiba T."/>
        </authorList>
    </citation>
    <scope>FUNCTION</scope>
    <scope>CATALYTIC ACTIVITY</scope>
    <scope>BIOPHYSICOCHEMICAL PROPERTIES</scope>
    <scope>INDUCTION</scope>
    <scope>TISSUE SPECIFICITY</scope>
    <scope>SUBUNIT</scope>
</reference>
<reference key="7">
    <citation type="journal article" date="2000" name="Proc. Natl. Acad. Sci. U.S.A.">
        <title>The Arabidopsis aldehyde oxidase 3 (AAO3) gene product catalyzes the final step in abscisic acid biosynthesis in leaves.</title>
        <authorList>
            <person name="Seo M."/>
            <person name="Peeters A.J.M."/>
            <person name="Koiwai H."/>
            <person name="Oritani T."/>
            <person name="Marion-Poll A."/>
            <person name="Zeevaart J.A.D."/>
            <person name="Koornneef M."/>
            <person name="Kamiya Y."/>
            <person name="Koshiba T."/>
        </authorList>
    </citation>
    <scope>FUNCTION</scope>
    <scope>CATALYTIC ACTIVITY</scope>
    <scope>TISSUE SPECIFICITY</scope>
    <scope>MUTANT AAO3</scope>
</reference>
<reference key="8">
    <citation type="journal article" date="2002" name="J. Biol. Chem.">
        <title>Regulation of osmotic stress-responsive gene expression by the LOS6/ABA1 locus in Arabidopsis.</title>
        <authorList>
            <person name="Xiong L."/>
            <person name="Lee H."/>
            <person name="Ishitani M."/>
            <person name="Zhu J.-K."/>
        </authorList>
    </citation>
    <scope>INDUCTION</scope>
</reference>
<reference key="9">
    <citation type="journal article" date="2002" name="Plant Cell">
        <title>A unique short-chain dehydrogenase/reductase in Arabidopsis glucose signaling and abscisic acid biosynthesis and functions.</title>
        <authorList>
            <person name="Cheng W.-H."/>
            <person name="Endo A."/>
            <person name="Zhou L."/>
            <person name="Penney J."/>
            <person name="Chen H.-C."/>
            <person name="Arroyo A."/>
            <person name="Leon P."/>
            <person name="Nambara E."/>
            <person name="Asami T."/>
            <person name="Seo M."/>
            <person name="Koshiba T."/>
            <person name="Sheen J."/>
        </authorList>
    </citation>
    <scope>INDUCTION</scope>
</reference>
<reference key="10">
    <citation type="journal article" date="2004" name="Plant Cell Physiol.">
        <title>Comparative studies on the Arabidopsis aldehyde oxidase (AAO) gene family revealed a major role of AAO3 in ABA biosynthesis in seeds.</title>
        <authorList>
            <person name="Seo M."/>
            <person name="Aoki H."/>
            <person name="Koiwai H."/>
            <person name="Kamiya Y."/>
            <person name="Nambara E."/>
            <person name="Koshiba T."/>
        </authorList>
    </citation>
    <scope>FUNCTION</scope>
    <scope>TISSUE SPECIFICITY</scope>
</reference>
<reference key="11">
    <citation type="journal article" date="2004" name="Plant Physiol.">
        <title>Two new alleles of the abscisic aldehyde oxidase 3 gene reveal its role in abscisic acid biosynthesis in seeds.</title>
        <authorList>
            <person name="Gonzalez-Guzman M."/>
            <person name="Abia D."/>
            <person name="Salinas J."/>
            <person name="Serrano R."/>
            <person name="Rodriguez P.L."/>
        </authorList>
    </citation>
    <scope>FUNCTION</scope>
    <scope>TISSUE SPECIFICITY</scope>
    <scope>MUTAGENESIS OF 821-LEU--LYS-826</scope>
</reference>
<reference key="12">
    <citation type="journal article" date="2006" name="Plant Cell Environ.">
        <title>Both abscisic acid (ABA)-dependent and ABA-independent pathways govern the induction of NCED3, AAO3 and ABA1 in response to salt stress.</title>
        <authorList>
            <person name="Barrero J.M."/>
            <person name="Rodriguez P.L."/>
            <person name="Quesada V."/>
            <person name="Piqueras P."/>
            <person name="Ponce M.R."/>
            <person name="Micol J.L."/>
        </authorList>
    </citation>
    <scope>FUNCTION</scope>
    <scope>DISRUPTION PHENOTYPE</scope>
    <scope>INDUCTION BY SALT STRESS AND ABA</scope>
    <source>
        <strain>cv. Columbia</strain>
    </source>
</reference>
<reference key="13">
    <citation type="journal article" date="2009" name="Plant J.">
        <title>Identification of a novel E3 ubiquitin ligase that is required for suppression of premature senescence in Arabidopsis.</title>
        <authorList>
            <person name="Raab S."/>
            <person name="Drechsel G."/>
            <person name="Zarepour M."/>
            <person name="Hartung W."/>
            <person name="Koshiba T."/>
            <person name="Bittner F."/>
            <person name="Hoth S."/>
        </authorList>
    </citation>
    <scope>INTERACTION WITH PUB44</scope>
</reference>
<keyword id="KW-0001">2Fe-2S</keyword>
<keyword id="KW-0937">Abscisic acid biosynthesis</keyword>
<keyword id="KW-0073">Auxin biosynthesis</keyword>
<keyword id="KW-0963">Cytoplasm</keyword>
<keyword id="KW-0274">FAD</keyword>
<keyword id="KW-0285">Flavoprotein</keyword>
<keyword id="KW-0408">Iron</keyword>
<keyword id="KW-0411">Iron-sulfur</keyword>
<keyword id="KW-0479">Metal-binding</keyword>
<keyword id="KW-0500">Molybdenum</keyword>
<keyword id="KW-0520">NAD</keyword>
<keyword id="KW-0560">Oxidoreductase</keyword>
<keyword id="KW-1185">Reference proteome</keyword>